<keyword id="KW-0408">Iron</keyword>
<keyword id="KW-0479">Metal-binding</keyword>
<keyword id="KW-0560">Oxidoreductase</keyword>
<keyword id="KW-1185">Reference proteome</keyword>
<proteinExistence type="evidence at transcript level"/>
<protein>
    <recommendedName>
        <fullName evidence="8">Gibberellin 20 oxidase 1</fullName>
        <shortName evidence="8">OsGA20ox1</shortName>
        <ecNumber evidence="10">1.14.11.-</ecNumber>
    </recommendedName>
    <alternativeName>
        <fullName evidence="8">GA 20-oxidase 1</fullName>
    </alternativeName>
    <alternativeName>
        <fullName evidence="10">Gibberellin C-20 oxidase 1</fullName>
    </alternativeName>
    <alternativeName>
        <fullName evidence="9">Os20ox</fullName>
    </alternativeName>
</protein>
<reference key="1">
    <citation type="journal article" date="1997" name="Physiol. Plantarum">
        <title>Cloning and characterization of a cDNA encoding gibberellin 20-oxidase from rice (Oryza sativa) seedlings.</title>
        <authorList>
            <person name="Toyomasu T."/>
            <person name="Kawaide H."/>
            <person name="Sekimoto H."/>
            <person name="von Numers C."/>
            <person name="Phillips A.L."/>
            <person name="Hedden P."/>
            <person name="Kamiya Y."/>
        </authorList>
    </citation>
    <scope>NUCLEOTIDE SEQUENCE [MRNA]</scope>
    <scope>FUNCTION</scope>
    <scope>INDUCTION</scope>
    <source>
        <strain>cv. Nipponbare</strain>
    </source>
</reference>
<reference key="2">
    <citation type="journal article" date="2005" name="Genome Res.">
        <title>Sequence, annotation, and analysis of synteny between rice chromosome 3 and diverged grass species.</title>
        <authorList>
            <consortium name="The rice chromosome 3 sequencing consortium"/>
            <person name="Buell C.R."/>
            <person name="Yuan Q."/>
            <person name="Ouyang S."/>
            <person name="Liu J."/>
            <person name="Zhu W."/>
            <person name="Wang A."/>
            <person name="Maiti R."/>
            <person name="Haas B."/>
            <person name="Wortman J."/>
            <person name="Pertea M."/>
            <person name="Jones K.M."/>
            <person name="Kim M."/>
            <person name="Overton L."/>
            <person name="Tsitrin T."/>
            <person name="Fadrosh D."/>
            <person name="Bera J."/>
            <person name="Weaver B."/>
            <person name="Jin S."/>
            <person name="Johri S."/>
            <person name="Reardon M."/>
            <person name="Webb K."/>
            <person name="Hill J."/>
            <person name="Moffat K."/>
            <person name="Tallon L."/>
            <person name="Van Aken S."/>
            <person name="Lewis M."/>
            <person name="Utterback T."/>
            <person name="Feldblyum T."/>
            <person name="Zismann V."/>
            <person name="Iobst S."/>
            <person name="Hsiao J."/>
            <person name="de Vazeille A.R."/>
            <person name="Salzberg S.L."/>
            <person name="White O."/>
            <person name="Fraser C.M."/>
            <person name="Yu Y."/>
            <person name="Kim H."/>
            <person name="Rambo T."/>
            <person name="Currie J."/>
            <person name="Collura K."/>
            <person name="Kernodle-Thompson S."/>
            <person name="Wei F."/>
            <person name="Kudrna K."/>
            <person name="Ammiraju J.S.S."/>
            <person name="Luo M."/>
            <person name="Goicoechea J.L."/>
            <person name="Wing R.A."/>
            <person name="Henry D."/>
            <person name="Oates R."/>
            <person name="Palmer M."/>
            <person name="Pries G."/>
            <person name="Saski C."/>
            <person name="Simmons J."/>
            <person name="Soderlund C."/>
            <person name="Nelson W."/>
            <person name="de la Bastide M."/>
            <person name="Spiegel L."/>
            <person name="Nascimento L."/>
            <person name="Huang E."/>
            <person name="Preston R."/>
            <person name="Zutavern T."/>
            <person name="Palmer L."/>
            <person name="O'Shaughnessy A."/>
            <person name="Dike S."/>
            <person name="McCombie W.R."/>
            <person name="Minx P."/>
            <person name="Cordum H."/>
            <person name="Wilson R."/>
            <person name="Jin W."/>
            <person name="Lee H.R."/>
            <person name="Jiang J."/>
            <person name="Jackson S."/>
        </authorList>
    </citation>
    <scope>NUCLEOTIDE SEQUENCE [LARGE SCALE GENOMIC DNA]</scope>
    <source>
        <strain>cv. Nipponbare</strain>
    </source>
</reference>
<reference key="3">
    <citation type="journal article" date="2005" name="Nature">
        <title>The map-based sequence of the rice genome.</title>
        <authorList>
            <consortium name="International rice genome sequencing project (IRGSP)"/>
        </authorList>
    </citation>
    <scope>NUCLEOTIDE SEQUENCE [LARGE SCALE GENOMIC DNA]</scope>
    <source>
        <strain>cv. Nipponbare</strain>
    </source>
</reference>
<reference key="4">
    <citation type="journal article" date="2008" name="Nucleic Acids Res.">
        <title>The rice annotation project database (RAP-DB): 2008 update.</title>
        <authorList>
            <consortium name="The rice annotation project (RAP)"/>
        </authorList>
    </citation>
    <scope>GENOME REANNOTATION</scope>
    <source>
        <strain>cv. Nipponbare</strain>
    </source>
</reference>
<reference key="5">
    <citation type="journal article" date="2013" name="Rice">
        <title>Improvement of the Oryza sativa Nipponbare reference genome using next generation sequence and optical map data.</title>
        <authorList>
            <person name="Kawahara Y."/>
            <person name="de la Bastide M."/>
            <person name="Hamilton J.P."/>
            <person name="Kanamori H."/>
            <person name="McCombie W.R."/>
            <person name="Ouyang S."/>
            <person name="Schwartz D.C."/>
            <person name="Tanaka T."/>
            <person name="Wu J."/>
            <person name="Zhou S."/>
            <person name="Childs K.L."/>
            <person name="Davidson R.M."/>
            <person name="Lin H."/>
            <person name="Quesada-Ocampo L."/>
            <person name="Vaillancourt B."/>
            <person name="Sakai H."/>
            <person name="Lee S.S."/>
            <person name="Kim J."/>
            <person name="Numa H."/>
            <person name="Itoh T."/>
            <person name="Buell C.R."/>
            <person name="Matsumoto T."/>
        </authorList>
    </citation>
    <scope>GENOME REANNOTATION</scope>
    <source>
        <strain>cv. Nipponbare</strain>
    </source>
</reference>
<reference key="6">
    <citation type="journal article" date="2002" name="Nature">
        <title>A mutant gibberellin-synthesis gene in rice.</title>
        <authorList>
            <person name="Sasaki A."/>
            <person name="Ashikari M."/>
            <person name="Ueguchi-Tanaka M."/>
            <person name="Itoh H."/>
            <person name="Nishimura A."/>
            <person name="Swapan D."/>
            <person name="Ishiyama K."/>
            <person name="Saito T."/>
            <person name="Kobayashi M."/>
            <person name="Khush G.S."/>
            <person name="Kitano H."/>
            <person name="Matsuoka M."/>
        </authorList>
    </citation>
    <scope>TISSUE SPECIFICITY</scope>
</reference>
<reference key="7">
    <citation type="journal article" date="2003" name="Plant J.">
        <title>Where do gibberellin biosynthesis and gibberellin signaling occur in rice plants?</title>
        <authorList>
            <person name="Kaneko M."/>
            <person name="Itoh H."/>
            <person name="Inukai Y."/>
            <person name="Sakamoto T."/>
            <person name="Ueguchi-Tanaka M."/>
            <person name="Ashikari M."/>
            <person name="Matsuoka M."/>
        </authorList>
    </citation>
    <scope>TISSUE SPECIFICITY</scope>
</reference>
<reference key="8">
    <citation type="journal article" date="2004" name="Plant Mol. Biol.">
        <title>A role of OsGA20ox1, encoding an isoform of gibberellin 20-oxidase, for regulation of plant stature in rice.</title>
        <authorList>
            <person name="Oikawa T."/>
            <person name="Koshioka M."/>
            <person name="Kojima K."/>
            <person name="Yoshida H."/>
            <person name="Kawata M."/>
        </authorList>
    </citation>
    <scope>FUNCTION</scope>
</reference>
<name>GAOX1_ORYSJ</name>
<sequence length="372" mass="42256">MSMVVQQEQEVVFDAAVLSGQTEIPSQFIWPAEESPGSVAVEELEVALIDVGAGAERSSVVRQVGEACERHGFFLVVNHGIEAALLEEAHRCMDAFFTLPLGEKQRAQRRAGESCGYASSFTGRFASKLPWKETLSFRYSSAGDEEGEEGVGEYLVRKLGAEHGRRLGEVYSRYCHEMSRLSLELMEVLGESLGIVGDRRHYFRRFFQRNDSIMRLNYYPACQRPLDTLGTGPHCDPTSLTILHQDHVGGLEVWAEGRWRAIRPRPGALVVNVGDTFMALSNARYRSCLHRAVVNSTAPRRSLAFFLCPEMDTVVRPPEELVDDHHPRVYPDFTWRALLDFTQRHYRADMRTLQAFSDWLNHHRHLQPTIYS</sequence>
<organism>
    <name type="scientific">Oryza sativa subsp. japonica</name>
    <name type="common">Rice</name>
    <dbReference type="NCBI Taxonomy" id="39947"/>
    <lineage>
        <taxon>Eukaryota</taxon>
        <taxon>Viridiplantae</taxon>
        <taxon>Streptophyta</taxon>
        <taxon>Embryophyta</taxon>
        <taxon>Tracheophyta</taxon>
        <taxon>Spermatophyta</taxon>
        <taxon>Magnoliopsida</taxon>
        <taxon>Liliopsida</taxon>
        <taxon>Poales</taxon>
        <taxon>Poaceae</taxon>
        <taxon>BOP clade</taxon>
        <taxon>Oryzoideae</taxon>
        <taxon>Oryzeae</taxon>
        <taxon>Oryzinae</taxon>
        <taxon>Oryza</taxon>
        <taxon>Oryza sativa</taxon>
    </lineage>
</organism>
<accession>P93771</accession>
<accession>Q10AC7</accession>
<accession>Q84M83</accession>
<evidence type="ECO:0000250" key="1">
    <source>
        <dbReference type="UniProtKB" id="O04705"/>
    </source>
</evidence>
<evidence type="ECO:0000255" key="2"/>
<evidence type="ECO:0000255" key="3">
    <source>
        <dbReference type="PROSITE-ProRule" id="PRU00805"/>
    </source>
</evidence>
<evidence type="ECO:0000269" key="4">
    <source>
    </source>
</evidence>
<evidence type="ECO:0000269" key="5">
    <source>
    </source>
</evidence>
<evidence type="ECO:0000269" key="6">
    <source>
    </source>
</evidence>
<evidence type="ECO:0000269" key="7">
    <source ref="1"/>
</evidence>
<evidence type="ECO:0000303" key="8">
    <source>
    </source>
</evidence>
<evidence type="ECO:0000303" key="9">
    <source ref="1"/>
</evidence>
<evidence type="ECO:0000305" key="10"/>
<evidence type="ECO:0000312" key="11">
    <source>
        <dbReference type="EMBL" id="AAP21386.1"/>
    </source>
</evidence>
<evidence type="ECO:0000312" key="12">
    <source>
        <dbReference type="EMBL" id="ABF99990.1"/>
    </source>
</evidence>
<evidence type="ECO:0000312" key="13">
    <source>
        <dbReference type="EMBL" id="BAF13865.1"/>
    </source>
</evidence>
<gene>
    <name evidence="10" type="primary">GA20OX1</name>
    <name evidence="10" type="synonym">20ox1</name>
    <name evidence="10" type="synonym">GA20ox-1</name>
    <name evidence="13" type="ordered locus">Os03g0856700</name>
    <name evidence="12" type="ordered locus">LOC_Os03g63970</name>
    <name evidence="11" type="ORF">OSJNBa0059G06.22</name>
</gene>
<feature type="chain" id="PRO_0000219517" description="Gibberellin 20 oxidase 1">
    <location>
        <begin position="1"/>
        <end position="372"/>
    </location>
</feature>
<feature type="domain" description="Fe2OG dioxygenase" evidence="3">
    <location>
        <begin position="209"/>
        <end position="309"/>
    </location>
</feature>
<feature type="active site" evidence="2">
    <location>
        <position position="300"/>
    </location>
</feature>
<feature type="binding site" evidence="3">
    <location>
        <position position="234"/>
    </location>
    <ligand>
        <name>Fe cation</name>
        <dbReference type="ChEBI" id="CHEBI:24875"/>
    </ligand>
</feature>
<feature type="binding site" evidence="3">
    <location>
        <position position="236"/>
    </location>
    <ligand>
        <name>Fe cation</name>
        <dbReference type="ChEBI" id="CHEBI:24875"/>
    </ligand>
</feature>
<feature type="binding site" evidence="3">
    <location>
        <position position="290"/>
    </location>
    <ligand>
        <name>Fe cation</name>
        <dbReference type="ChEBI" id="CHEBI:24875"/>
    </ligand>
</feature>
<feature type="sequence conflict" description="In Ref. 1; AAB48239." evidence="10" ref="1">
    <original>AQRRAGESCG</original>
    <variation>RSGARGRTA</variation>
    <location>
        <begin position="107"/>
        <end position="116"/>
    </location>
</feature>
<feature type="sequence conflict" description="In Ref. 1; AAB48239." evidence="10" ref="1">
    <original>TL</original>
    <variation>LF</variation>
    <location>
        <begin position="352"/>
        <end position="353"/>
    </location>
</feature>
<comment type="function">
    <text evidence="6 7">Key oxidase enzyme in the biosynthesis of gibberellin (PubMed:15604710, Ref.1). Catalyzes the conversion of GA12 and GA53 to GA9 and GA20 respectively, via a three-step oxidation at C-20 of the GA skeleton (Ref.1).</text>
</comment>
<comment type="catalytic activity">
    <reaction evidence="1">
        <text>gibberellin A12 + 2 2-oxoglutarate + 3 O2 + H(+) = gibberellin A9 + 2 succinate + 3 CO2 + 2 H2O</text>
        <dbReference type="Rhea" id="RHEA:60772"/>
        <dbReference type="ChEBI" id="CHEBI:15377"/>
        <dbReference type="ChEBI" id="CHEBI:15378"/>
        <dbReference type="ChEBI" id="CHEBI:15379"/>
        <dbReference type="ChEBI" id="CHEBI:16526"/>
        <dbReference type="ChEBI" id="CHEBI:16810"/>
        <dbReference type="ChEBI" id="CHEBI:30031"/>
        <dbReference type="ChEBI" id="CHEBI:58627"/>
        <dbReference type="ChEBI" id="CHEBI:73255"/>
    </reaction>
    <physiologicalReaction direction="left-to-right" evidence="1">
        <dbReference type="Rhea" id="RHEA:60773"/>
    </physiologicalReaction>
</comment>
<comment type="catalytic activity">
    <reaction evidence="1">
        <text>gibberellin A53 + 2 2-oxoglutarate + 3 O2 + H(+) = gibberellin A20 + 2 succinate + 3 CO2 + 2 H2O</text>
        <dbReference type="Rhea" id="RHEA:60796"/>
        <dbReference type="ChEBI" id="CHEBI:15377"/>
        <dbReference type="ChEBI" id="CHEBI:15378"/>
        <dbReference type="ChEBI" id="CHEBI:15379"/>
        <dbReference type="ChEBI" id="CHEBI:16526"/>
        <dbReference type="ChEBI" id="CHEBI:16810"/>
        <dbReference type="ChEBI" id="CHEBI:30031"/>
        <dbReference type="ChEBI" id="CHEBI:58526"/>
        <dbReference type="ChEBI" id="CHEBI:143954"/>
    </reaction>
    <physiologicalReaction direction="left-to-right" evidence="1">
        <dbReference type="Rhea" id="RHEA:60797"/>
    </physiologicalReaction>
</comment>
<comment type="cofactor">
    <cofactor evidence="3">
        <name>Fe(2+)</name>
        <dbReference type="ChEBI" id="CHEBI:29033"/>
    </cofactor>
    <text evidence="3">Binds 1 Fe(2+) ion per subunit.</text>
</comment>
<comment type="cofactor">
    <cofactor>
        <name>L-ascorbate</name>
        <dbReference type="ChEBI" id="CHEBI:38290"/>
    </cofactor>
</comment>
<comment type="tissue specificity">
    <text evidence="4 5">Preferentially expressed in reproductive organs (PubMed:11961544). Expressed in the epithelium of embryos and the tapetum of anthers. Expressed at low levels in the shoot apical meristem (PubMed:12834406).</text>
</comment>
<comment type="induction">
    <text evidence="7">Negatively controlled by the level of physiologically active gibberellin.</text>
</comment>
<comment type="miscellaneous">
    <text evidence="6">Plants over-expressing GA20OX1 have high levels of bioactive gibberellins, and exhibit an overgrowth phenotype with increased internode elongation and leaf sheath length (PubMed:15604710). Plant silencing GA20OX1 exhibit a semi-dwarf phenotype (PubMed:15604710).</text>
</comment>
<comment type="similarity">
    <text evidence="10">Belongs to the iron/ascorbate-dependent oxidoreductase family. GA20OX subfamily.</text>
</comment>
<comment type="sequence caution" evidence="10">
    <conflict type="erroneous initiation">
        <sequence resource="EMBL-CDS" id="AAP21386"/>
    </conflict>
    <text>Truncated N-terminus.</text>
</comment>
<dbReference type="EC" id="1.14.11.-" evidence="10"/>
<dbReference type="EMBL" id="U50333">
    <property type="protein sequence ID" value="AAB48239.1"/>
    <property type="molecule type" value="mRNA"/>
</dbReference>
<dbReference type="EMBL" id="AC096690">
    <property type="protein sequence ID" value="AAP21386.1"/>
    <property type="status" value="ALT_INIT"/>
    <property type="molecule type" value="Genomic_DNA"/>
</dbReference>
<dbReference type="EMBL" id="DP000009">
    <property type="protein sequence ID" value="ABF99990.1"/>
    <property type="molecule type" value="Genomic_DNA"/>
</dbReference>
<dbReference type="EMBL" id="AP008209">
    <property type="protein sequence ID" value="BAF13865.1"/>
    <property type="molecule type" value="Genomic_DNA"/>
</dbReference>
<dbReference type="EMBL" id="AP014959">
    <property type="protein sequence ID" value="BAS87451.1"/>
    <property type="molecule type" value="Genomic_DNA"/>
</dbReference>
<dbReference type="EMBL" id="AK099111">
    <property type="protein sequence ID" value="BAG93931.1"/>
    <property type="molecule type" value="mRNA"/>
</dbReference>
<dbReference type="PIR" id="T04337">
    <property type="entry name" value="T04337"/>
</dbReference>
<dbReference type="SMR" id="P93771"/>
<dbReference type="FunCoup" id="P93771">
    <property type="interactions" value="90"/>
</dbReference>
<dbReference type="STRING" id="39947.P93771"/>
<dbReference type="PaxDb" id="39947-P93771"/>
<dbReference type="EnsemblPlants" id="Os03t0856700-01">
    <property type="protein sequence ID" value="Os03t0856700-01"/>
    <property type="gene ID" value="Os03g0856700"/>
</dbReference>
<dbReference type="EnsemblPlants" id="Os03t0856700-02">
    <property type="protein sequence ID" value="Os03t0856700-02"/>
    <property type="gene ID" value="Os03g0856700"/>
</dbReference>
<dbReference type="Gramene" id="Os03t0856700-01">
    <property type="protein sequence ID" value="Os03t0856700-01"/>
    <property type="gene ID" value="Os03g0856700"/>
</dbReference>
<dbReference type="Gramene" id="Os03t0856700-02">
    <property type="protein sequence ID" value="Os03t0856700-02"/>
    <property type="gene ID" value="Os03g0856700"/>
</dbReference>
<dbReference type="KEGG" id="dosa:Os03g0856700"/>
<dbReference type="KEGG" id="osa:4334841"/>
<dbReference type="eggNOG" id="KOG0143">
    <property type="taxonomic scope" value="Eukaryota"/>
</dbReference>
<dbReference type="HOGENOM" id="CLU_010119_16_3_1"/>
<dbReference type="InParanoid" id="P93771"/>
<dbReference type="OMA" id="SQFIWPA"/>
<dbReference type="OrthoDB" id="288590at2759"/>
<dbReference type="BRENDA" id="1.14.11.13">
    <property type="organism ID" value="4460"/>
</dbReference>
<dbReference type="Proteomes" id="UP000000763">
    <property type="component" value="Chromosome 3"/>
</dbReference>
<dbReference type="Proteomes" id="UP000059680">
    <property type="component" value="Chromosome 3"/>
</dbReference>
<dbReference type="GO" id="GO:0045544">
    <property type="term" value="F:gibberellin 20-oxidase activity"/>
    <property type="evidence" value="ECO:0000318"/>
    <property type="project" value="GO_Central"/>
</dbReference>
<dbReference type="GO" id="GO:0046872">
    <property type="term" value="F:metal ion binding"/>
    <property type="evidence" value="ECO:0007669"/>
    <property type="project" value="UniProtKB-KW"/>
</dbReference>
<dbReference type="GO" id="GO:0009908">
    <property type="term" value="P:flower development"/>
    <property type="evidence" value="ECO:0000318"/>
    <property type="project" value="GO_Central"/>
</dbReference>
<dbReference type="GO" id="GO:0009686">
    <property type="term" value="P:gibberellin biosynthetic process"/>
    <property type="evidence" value="ECO:0000318"/>
    <property type="project" value="GO_Central"/>
</dbReference>
<dbReference type="GO" id="GO:0009685">
    <property type="term" value="P:gibberellin metabolic process"/>
    <property type="evidence" value="ECO:0000305"/>
    <property type="project" value="Gramene"/>
</dbReference>
<dbReference type="GO" id="GO:0009416">
    <property type="term" value="P:response to light stimulus"/>
    <property type="evidence" value="ECO:0000318"/>
    <property type="project" value="GO_Central"/>
</dbReference>
<dbReference type="GO" id="GO:0009826">
    <property type="term" value="P:unidimensional cell growth"/>
    <property type="evidence" value="ECO:0000318"/>
    <property type="project" value="GO_Central"/>
</dbReference>
<dbReference type="FunFam" id="2.60.120.330:FF:000003">
    <property type="entry name" value="Gibberellin 20 oxidase 2"/>
    <property type="match status" value="1"/>
</dbReference>
<dbReference type="Gene3D" id="2.60.120.330">
    <property type="entry name" value="B-lactam Antibiotic, Isopenicillin N Synthase, Chain"/>
    <property type="match status" value="1"/>
</dbReference>
<dbReference type="InterPro" id="IPR026992">
    <property type="entry name" value="DIOX_N"/>
</dbReference>
<dbReference type="InterPro" id="IPR044861">
    <property type="entry name" value="IPNS-like_FE2OG_OXY"/>
</dbReference>
<dbReference type="InterPro" id="IPR027443">
    <property type="entry name" value="IPNS-like_sf"/>
</dbReference>
<dbReference type="InterPro" id="IPR050231">
    <property type="entry name" value="Iron_ascorbate_oxido_reductase"/>
</dbReference>
<dbReference type="InterPro" id="IPR005123">
    <property type="entry name" value="Oxoglu/Fe-dep_dioxygenase_dom"/>
</dbReference>
<dbReference type="PANTHER" id="PTHR47990">
    <property type="entry name" value="2-OXOGLUTARATE (2OG) AND FE(II)-DEPENDENT OXYGENASE SUPERFAMILY PROTEIN-RELATED"/>
    <property type="match status" value="1"/>
</dbReference>
<dbReference type="Pfam" id="PF03171">
    <property type="entry name" value="2OG-FeII_Oxy"/>
    <property type="match status" value="1"/>
</dbReference>
<dbReference type="Pfam" id="PF14226">
    <property type="entry name" value="DIOX_N"/>
    <property type="match status" value="1"/>
</dbReference>
<dbReference type="PRINTS" id="PR00682">
    <property type="entry name" value="IPNSYNTHASE"/>
</dbReference>
<dbReference type="SUPFAM" id="SSF51197">
    <property type="entry name" value="Clavaminate synthase-like"/>
    <property type="match status" value="1"/>
</dbReference>
<dbReference type="PROSITE" id="PS51471">
    <property type="entry name" value="FE2OG_OXY"/>
    <property type="match status" value="1"/>
</dbReference>